<accession>Q9I3P8</accession>
<sequence>MQVKRFFAADMRQAMKLVRDELGPDAAILGNRRVAGGIELTAALDYQAPPAPSKPNPALEVELRKTQARIAEARAELTARPAETQRKDRQLFAEEKPARPTLAESMTAAHAKPQVGGQTLEAMRFELNGLRELIEVQLGSIAWGQLQHQRPQQANLWRRLQRMGLPAELSKPLLERVAAVGDTRQAWRMLLAHLSRAVQTPEQDPLDAGGVLALVGPAGAGKTTTLAKMAARYVLKYGAQSLALVSMDSYRIGAQEQIKTLGRILNVPVTLVDPGQSLIQALAPLARKRMVLIDTAGLPASDPALRMQLEALASPSLNVKNYLVMATTSQSQVLKSAYQTYRHCGLAGCILTKLDEAGSLGESMALAIAQRLPVAYLADGPRIPDDLQVARSHQLVSRAVSLQAPEEPSEDAMAEMFAGLYQQPARRAG</sequence>
<evidence type="ECO:0000250" key="1"/>
<evidence type="ECO:0000305" key="2"/>
<name>FLHF_PSEAE</name>
<proteinExistence type="inferred from homology"/>
<reference key="1">
    <citation type="journal article" date="2000" name="Nature">
        <title>Complete genome sequence of Pseudomonas aeruginosa PAO1, an opportunistic pathogen.</title>
        <authorList>
            <person name="Stover C.K."/>
            <person name="Pham X.-Q.T."/>
            <person name="Erwin A.L."/>
            <person name="Mizoguchi S.D."/>
            <person name="Warrener P."/>
            <person name="Hickey M.J."/>
            <person name="Brinkman F.S.L."/>
            <person name="Hufnagle W.O."/>
            <person name="Kowalik D.J."/>
            <person name="Lagrou M."/>
            <person name="Garber R.L."/>
            <person name="Goltry L."/>
            <person name="Tolentino E."/>
            <person name="Westbrock-Wadman S."/>
            <person name="Yuan Y."/>
            <person name="Brody L.L."/>
            <person name="Coulter S.N."/>
            <person name="Folger K.R."/>
            <person name="Kas A."/>
            <person name="Larbig K."/>
            <person name="Lim R.M."/>
            <person name="Smith K.A."/>
            <person name="Spencer D.H."/>
            <person name="Wong G.K.-S."/>
            <person name="Wu Z."/>
            <person name="Paulsen I.T."/>
            <person name="Reizer J."/>
            <person name="Saier M.H. Jr."/>
            <person name="Hancock R.E.W."/>
            <person name="Lory S."/>
            <person name="Olson M.V."/>
        </authorList>
    </citation>
    <scope>NUCLEOTIDE SEQUENCE [LARGE SCALE GENOMIC DNA]</scope>
    <source>
        <strain>ATCC 15692 / DSM 22644 / CIP 104116 / JCM 14847 / LMG 12228 / 1C / PRS 101 / PAO1</strain>
    </source>
</reference>
<protein>
    <recommendedName>
        <fullName>Flagellar biosynthesis protein FlhF</fullName>
    </recommendedName>
    <alternativeName>
        <fullName>Flagella-associated GTP-binding protein</fullName>
    </alternativeName>
</protein>
<comment type="function">
    <text evidence="1">Necessary for flagellar biosynthesis. May be involved in translocation of the flagellum (By similarity).</text>
</comment>
<comment type="subcellular location">
    <subcellularLocation>
        <location evidence="1">Cell membrane</location>
        <topology evidence="1">Peripheral membrane protein</topology>
        <orientation evidence="1">Cytoplasmic side</orientation>
    </subcellularLocation>
</comment>
<comment type="similarity">
    <text evidence="2">Belongs to the GTP-binding SRP family.</text>
</comment>
<dbReference type="EMBL" id="AE004091">
    <property type="protein sequence ID" value="AAG04842.1"/>
    <property type="molecule type" value="Genomic_DNA"/>
</dbReference>
<dbReference type="PIR" id="A83463">
    <property type="entry name" value="A83463"/>
</dbReference>
<dbReference type="RefSeq" id="NP_250144.1">
    <property type="nucleotide sequence ID" value="NC_002516.2"/>
</dbReference>
<dbReference type="RefSeq" id="WP_003114281.1">
    <property type="nucleotide sequence ID" value="NZ_QZGE01000005.1"/>
</dbReference>
<dbReference type="SMR" id="Q9I3P8"/>
<dbReference type="STRING" id="208964.PA1453"/>
<dbReference type="PaxDb" id="208964-PA1453"/>
<dbReference type="GeneID" id="881865"/>
<dbReference type="KEGG" id="pae:PA1453"/>
<dbReference type="PATRIC" id="fig|208964.12.peg.1504"/>
<dbReference type="PseudoCAP" id="PA1453"/>
<dbReference type="HOGENOM" id="CLU_009301_11_5_6"/>
<dbReference type="InParanoid" id="Q9I3P8"/>
<dbReference type="OrthoDB" id="9778554at2"/>
<dbReference type="PhylomeDB" id="Q9I3P8"/>
<dbReference type="BioCyc" id="PAER208964:G1FZ6-1479-MONOMER"/>
<dbReference type="Proteomes" id="UP000002438">
    <property type="component" value="Chromosome"/>
</dbReference>
<dbReference type="GO" id="GO:0005886">
    <property type="term" value="C:plasma membrane"/>
    <property type="evidence" value="ECO:0000318"/>
    <property type="project" value="GO_Central"/>
</dbReference>
<dbReference type="GO" id="GO:0016887">
    <property type="term" value="F:ATP hydrolysis activity"/>
    <property type="evidence" value="ECO:0007669"/>
    <property type="project" value="InterPro"/>
</dbReference>
<dbReference type="GO" id="GO:0005525">
    <property type="term" value="F:GTP binding"/>
    <property type="evidence" value="ECO:0007669"/>
    <property type="project" value="UniProtKB-KW"/>
</dbReference>
<dbReference type="GO" id="GO:0003924">
    <property type="term" value="F:GTPase activity"/>
    <property type="evidence" value="ECO:0000318"/>
    <property type="project" value="GO_Central"/>
</dbReference>
<dbReference type="GO" id="GO:0005047">
    <property type="term" value="F:signal recognition particle binding"/>
    <property type="evidence" value="ECO:0000318"/>
    <property type="project" value="GO_Central"/>
</dbReference>
<dbReference type="GO" id="GO:0044781">
    <property type="term" value="P:bacterial-type flagellum organization"/>
    <property type="evidence" value="ECO:0007669"/>
    <property type="project" value="UniProtKB-KW"/>
</dbReference>
<dbReference type="GO" id="GO:0006605">
    <property type="term" value="P:protein targeting"/>
    <property type="evidence" value="ECO:0000318"/>
    <property type="project" value="GO_Central"/>
</dbReference>
<dbReference type="GO" id="GO:0015031">
    <property type="term" value="P:protein transport"/>
    <property type="evidence" value="ECO:0007669"/>
    <property type="project" value="UniProtKB-KW"/>
</dbReference>
<dbReference type="GO" id="GO:0006614">
    <property type="term" value="P:SRP-dependent cotranslational protein targeting to membrane"/>
    <property type="evidence" value="ECO:0007669"/>
    <property type="project" value="InterPro"/>
</dbReference>
<dbReference type="CDD" id="cd17873">
    <property type="entry name" value="FlhF"/>
    <property type="match status" value="1"/>
</dbReference>
<dbReference type="FunFam" id="3.40.50.300:FF:000695">
    <property type="entry name" value="Flagellar biosynthesis regulator FlhF"/>
    <property type="match status" value="1"/>
</dbReference>
<dbReference type="Gene3D" id="1.20.120.1380">
    <property type="entry name" value="Flagellar FlhF biosynthesis protein, N domain"/>
    <property type="match status" value="1"/>
</dbReference>
<dbReference type="Gene3D" id="3.40.50.300">
    <property type="entry name" value="P-loop containing nucleotide triphosphate hydrolases"/>
    <property type="match status" value="1"/>
</dbReference>
<dbReference type="InterPro" id="IPR003593">
    <property type="entry name" value="AAA+_ATPase"/>
</dbReference>
<dbReference type="InterPro" id="IPR020006">
    <property type="entry name" value="FlhF"/>
</dbReference>
<dbReference type="InterPro" id="IPR047040">
    <property type="entry name" value="FlhF__GTPase_dom"/>
</dbReference>
<dbReference type="InterPro" id="IPR027417">
    <property type="entry name" value="P-loop_NTPase"/>
</dbReference>
<dbReference type="InterPro" id="IPR000897">
    <property type="entry name" value="SRP54_GTPase_dom"/>
</dbReference>
<dbReference type="NCBIfam" id="TIGR03499">
    <property type="entry name" value="FlhF"/>
    <property type="match status" value="1"/>
</dbReference>
<dbReference type="PANTHER" id="PTHR43134:SF3">
    <property type="entry name" value="FLAGELLAR BIOSYNTHESIS PROTEIN FLHF"/>
    <property type="match status" value="1"/>
</dbReference>
<dbReference type="PANTHER" id="PTHR43134">
    <property type="entry name" value="SIGNAL RECOGNITION PARTICLE RECEPTOR SUBUNIT ALPHA"/>
    <property type="match status" value="1"/>
</dbReference>
<dbReference type="Pfam" id="PF00448">
    <property type="entry name" value="SRP54"/>
    <property type="match status" value="1"/>
</dbReference>
<dbReference type="SMART" id="SM00382">
    <property type="entry name" value="AAA"/>
    <property type="match status" value="1"/>
</dbReference>
<dbReference type="SMART" id="SM00962">
    <property type="entry name" value="SRP54"/>
    <property type="match status" value="1"/>
</dbReference>
<dbReference type="SUPFAM" id="SSF52540">
    <property type="entry name" value="P-loop containing nucleoside triphosphate hydrolases"/>
    <property type="match status" value="1"/>
</dbReference>
<feature type="chain" id="PRO_0000287816" description="Flagellar biosynthesis protein FlhF">
    <location>
        <begin position="1"/>
        <end position="429"/>
    </location>
</feature>
<feature type="binding site" evidence="1">
    <location>
        <begin position="216"/>
        <end position="223"/>
    </location>
    <ligand>
        <name>GTP</name>
        <dbReference type="ChEBI" id="CHEBI:37565"/>
    </ligand>
</feature>
<feature type="binding site" evidence="1">
    <location>
        <begin position="294"/>
        <end position="298"/>
    </location>
    <ligand>
        <name>GTP</name>
        <dbReference type="ChEBI" id="CHEBI:37565"/>
    </ligand>
</feature>
<feature type="binding site" evidence="1">
    <location>
        <begin position="352"/>
        <end position="355"/>
    </location>
    <ligand>
        <name>GTP</name>
        <dbReference type="ChEBI" id="CHEBI:37565"/>
    </ligand>
</feature>
<gene>
    <name type="primary">flhF</name>
    <name type="ordered locus">PA1453</name>
</gene>
<keyword id="KW-1005">Bacterial flagellum biogenesis</keyword>
<keyword id="KW-1006">Bacterial flagellum protein export</keyword>
<keyword id="KW-1003">Cell membrane</keyword>
<keyword id="KW-0342">GTP-binding</keyword>
<keyword id="KW-0472">Membrane</keyword>
<keyword id="KW-0547">Nucleotide-binding</keyword>
<keyword id="KW-0653">Protein transport</keyword>
<keyword id="KW-1185">Reference proteome</keyword>
<keyword id="KW-0813">Transport</keyword>
<organism>
    <name type="scientific">Pseudomonas aeruginosa (strain ATCC 15692 / DSM 22644 / CIP 104116 / JCM 14847 / LMG 12228 / 1C / PRS 101 / PAO1)</name>
    <dbReference type="NCBI Taxonomy" id="208964"/>
    <lineage>
        <taxon>Bacteria</taxon>
        <taxon>Pseudomonadati</taxon>
        <taxon>Pseudomonadota</taxon>
        <taxon>Gammaproteobacteria</taxon>
        <taxon>Pseudomonadales</taxon>
        <taxon>Pseudomonadaceae</taxon>
        <taxon>Pseudomonas</taxon>
    </lineage>
</organism>